<proteinExistence type="evidence at transcript level"/>
<gene>
    <name type="primary">spe-11</name>
    <name type="ORF">F48C1.7</name>
</gene>
<protein>
    <recommendedName>
        <fullName>Spermatocyte protein spe-11</fullName>
    </recommendedName>
    <alternativeName>
        <fullName>Defective spermatogenesis protein 11</fullName>
    </alternativeName>
</protein>
<sequence length="299" mass="35150">MSDEEIDISTALNNKTTPKKKSLKRNSNSQEGYESPEEREIVYPSVFGAIGTPMAKSDNAKEWDEWKEKERKKDKAEWKRYLRSKWDMTQGHLPLVSDSEFLKGRKEHKEYNSKARMDILDGLDEVNEGFFNCGKGAAMNIRYNDKNVSKKGAKKFVATVETAMKKAGNPTMEQMMTDDLDEDEARAEAEWERQREQRKLASRAYDAAMDEREDDAKYVPWDEYCQEMEELGKELKIGEKHYKKWLEKKMDENKVTHKFNAYQLDLKCLDEDAFSNKKSLKSVVRNVQKFYRKMREPKK</sequence>
<keyword id="KW-0963">Cytoplasm</keyword>
<keyword id="KW-0217">Developmental protein</keyword>
<keyword id="KW-0221">Differentiation</keyword>
<keyword id="KW-1185">Reference proteome</keyword>
<keyword id="KW-0744">Spermatogenesis</keyword>
<reference key="1">
    <citation type="journal article" date="1996" name="Development">
        <title>A sperm-supplied factor required for embryogenesis in C. elegans.</title>
        <authorList>
            <person name="Browning H."/>
            <person name="Strome S."/>
        </authorList>
    </citation>
    <scope>NUCLEOTIDE SEQUENCE [GENOMIC DNA]</scope>
    <scope>FUNCTION</scope>
    <scope>SUBCELLULAR LOCATION</scope>
    <scope>TISSUE SPECIFICITY</scope>
    <scope>DEVELOPMENTAL STAGE</scope>
    <scope>DISRUPTION PHENOTYPE</scope>
    <source>
        <strain>Bristol N2</strain>
    </source>
</reference>
<reference key="2">
    <citation type="journal article" date="1998" name="Science">
        <title>Genome sequence of the nematode C. elegans: a platform for investigating biology.</title>
        <authorList>
            <consortium name="The C. elegans sequencing consortium"/>
        </authorList>
    </citation>
    <scope>NUCLEOTIDE SEQUENCE [LARGE SCALE GENOMIC DNA]</scope>
    <source>
        <strain>Bristol N2</strain>
    </source>
</reference>
<reference key="3">
    <citation type="journal article" date="2010" name="Curr. Biol.">
        <title>Eggshell chitin and chitin-interacting proteins prevent polyspermy in C. elegans.</title>
        <authorList>
            <person name="Johnston W.L."/>
            <person name="Krizus A."/>
            <person name="Dennis J.W."/>
        </authorList>
    </citation>
    <scope>FUNCTION</scope>
</reference>
<comment type="function">
    <text evidence="2 3">Paternally sperm-supplied factor required for embryogenesis (PubMed:20971008, PubMed:8565851). Plays a role in preventing polyspermy possibly by promoting the formation of a continuous and cohesive eggshell chitin layer (PubMed:20971008).</text>
</comment>
<comment type="subcellular location">
    <subcellularLocation>
        <location evidence="3">Cytoplasm</location>
        <location evidence="3">Perinuclear region</location>
    </subcellularLocation>
    <text>Localized to the perinuclear region of sperm.</text>
</comment>
<comment type="tissue specificity">
    <text evidence="3">Expressed in mature sperm.</text>
</comment>
<comment type="developmental stage">
    <text evidence="3">Expressed during spermatogenesis.</text>
</comment>
<comment type="disruption phenotype">
    <text evidence="3">Worms fail to complete meiosis, form a weak eggshell, fail to orient properly the first mitotic spindle and fail to undergo cytokinesis.</text>
</comment>
<name>SPE11_CAEEL</name>
<accession>P54217</accession>
<evidence type="ECO:0000256" key="1">
    <source>
        <dbReference type="SAM" id="MobiDB-lite"/>
    </source>
</evidence>
<evidence type="ECO:0000269" key="2">
    <source>
    </source>
</evidence>
<evidence type="ECO:0000269" key="3">
    <source>
    </source>
</evidence>
<dbReference type="EMBL" id="U36483">
    <property type="protein sequence ID" value="AAA97861.1"/>
    <property type="molecule type" value="Genomic_DNA"/>
</dbReference>
<dbReference type="EMBL" id="FO080268">
    <property type="protein sequence ID" value="CCD62474.1"/>
    <property type="molecule type" value="Genomic_DNA"/>
</dbReference>
<dbReference type="PIR" id="T29546">
    <property type="entry name" value="T29546"/>
</dbReference>
<dbReference type="RefSeq" id="NP_491569.1">
    <property type="nucleotide sequence ID" value="NM_059168.5"/>
</dbReference>
<dbReference type="BioGRID" id="37637">
    <property type="interactions" value="1"/>
</dbReference>
<dbReference type="FunCoup" id="P54217">
    <property type="interactions" value="1720"/>
</dbReference>
<dbReference type="STRING" id="6239.F48C1.7.1"/>
<dbReference type="iPTMnet" id="P54217"/>
<dbReference type="PaxDb" id="6239-F48C1.7"/>
<dbReference type="PeptideAtlas" id="P54217"/>
<dbReference type="EnsemblMetazoa" id="F48C1.7.1">
    <property type="protein sequence ID" value="F48C1.7.1"/>
    <property type="gene ID" value="WBGene00004965"/>
</dbReference>
<dbReference type="GeneID" id="172179"/>
<dbReference type="KEGG" id="cel:CELE_F48C1.7"/>
<dbReference type="UCSC" id="F48C1.7">
    <property type="organism name" value="c. elegans"/>
</dbReference>
<dbReference type="AGR" id="WB:WBGene00004965"/>
<dbReference type="CTD" id="172179"/>
<dbReference type="WormBase" id="F48C1.7">
    <property type="protein sequence ID" value="CE10744"/>
    <property type="gene ID" value="WBGene00004965"/>
    <property type="gene designation" value="spe-11"/>
</dbReference>
<dbReference type="eggNOG" id="ENOG502R95F">
    <property type="taxonomic scope" value="Eukaryota"/>
</dbReference>
<dbReference type="HOGENOM" id="CLU_1099323_0_0_1"/>
<dbReference type="InParanoid" id="P54217"/>
<dbReference type="OMA" id="RYLRSKW"/>
<dbReference type="OrthoDB" id="5851895at2759"/>
<dbReference type="PRO" id="PR:P54217"/>
<dbReference type="Proteomes" id="UP000001940">
    <property type="component" value="Chromosome I"/>
</dbReference>
<dbReference type="Bgee" id="WBGene00004965">
    <property type="expression patterns" value="Expressed in adult organism and 1 other cell type or tissue"/>
</dbReference>
<dbReference type="GO" id="GO:0005634">
    <property type="term" value="C:nucleus"/>
    <property type="evidence" value="ECO:0000314"/>
    <property type="project" value="WormBase"/>
</dbReference>
<dbReference type="GO" id="GO:0048471">
    <property type="term" value="C:perinuclear region of cytoplasm"/>
    <property type="evidence" value="ECO:0007669"/>
    <property type="project" value="UniProtKB-SubCell"/>
</dbReference>
<dbReference type="GO" id="GO:0030703">
    <property type="term" value="P:eggshell formation"/>
    <property type="evidence" value="ECO:0000315"/>
    <property type="project" value="WormBase"/>
</dbReference>
<dbReference type="GO" id="GO:0060468">
    <property type="term" value="P:prevention of polyspermy"/>
    <property type="evidence" value="ECO:0000315"/>
    <property type="project" value="WormBase"/>
</dbReference>
<dbReference type="GO" id="GO:0007283">
    <property type="term" value="P:spermatogenesis"/>
    <property type="evidence" value="ECO:0007669"/>
    <property type="project" value="UniProtKB-KW"/>
</dbReference>
<feature type="chain" id="PRO_0000072116" description="Spermatocyte protein spe-11">
    <location>
        <begin position="1"/>
        <end position="299"/>
    </location>
</feature>
<feature type="region of interest" description="Disordered" evidence="1">
    <location>
        <begin position="1"/>
        <end position="38"/>
    </location>
</feature>
<organism>
    <name type="scientific">Caenorhabditis elegans</name>
    <dbReference type="NCBI Taxonomy" id="6239"/>
    <lineage>
        <taxon>Eukaryota</taxon>
        <taxon>Metazoa</taxon>
        <taxon>Ecdysozoa</taxon>
        <taxon>Nematoda</taxon>
        <taxon>Chromadorea</taxon>
        <taxon>Rhabditida</taxon>
        <taxon>Rhabditina</taxon>
        <taxon>Rhabditomorpha</taxon>
        <taxon>Rhabditoidea</taxon>
        <taxon>Rhabditidae</taxon>
        <taxon>Peloderinae</taxon>
        <taxon>Caenorhabditis</taxon>
    </lineage>
</organism>